<proteinExistence type="inferred from homology"/>
<geneLocation type="chloroplast"/>
<organism>
    <name type="scientific">Typha angustifolia</name>
    <name type="common">Narrow leaf cattail</name>
    <dbReference type="NCBI Taxonomy" id="59011"/>
    <lineage>
        <taxon>Eukaryota</taxon>
        <taxon>Viridiplantae</taxon>
        <taxon>Streptophyta</taxon>
        <taxon>Embryophyta</taxon>
        <taxon>Tracheophyta</taxon>
        <taxon>Spermatophyta</taxon>
        <taxon>Magnoliopsida</taxon>
        <taxon>Liliopsida</taxon>
        <taxon>Poales</taxon>
        <taxon>Typhaceae</taxon>
        <taxon>Typha</taxon>
    </lineage>
</organism>
<keyword id="KW-0150">Chloroplast</keyword>
<keyword id="KW-0472">Membrane</keyword>
<keyword id="KW-0934">Plastid</keyword>
<keyword id="KW-0793">Thylakoid</keyword>
<keyword id="KW-0812">Transmembrane</keyword>
<keyword id="KW-1133">Transmembrane helix</keyword>
<gene>
    <name evidence="1" type="primary">psbN</name>
</gene>
<feature type="chain" id="PRO_0000207968" description="Protein PsbN">
    <location>
        <begin position="1"/>
        <end position="43"/>
    </location>
</feature>
<feature type="transmembrane region" description="Helical" evidence="1">
    <location>
        <begin position="5"/>
        <end position="27"/>
    </location>
</feature>
<evidence type="ECO:0000255" key="1">
    <source>
        <dbReference type="HAMAP-Rule" id="MF_00293"/>
    </source>
</evidence>
<reference key="1">
    <citation type="submission" date="2002-09" db="EMBL/GenBank/DDBJ databases">
        <title>Phylogenetic relationships among the major lineages of Asparagales based on a large chloroplast data set.</title>
        <authorList>
            <person name="McPherson M.A."/>
            <person name="Rai H.S."/>
            <person name="Wong W.A."/>
            <person name="Graham S.W."/>
        </authorList>
    </citation>
    <scope>NUCLEOTIDE SEQUENCE [GENOMIC DNA]</scope>
</reference>
<dbReference type="EMBL" id="AY147517">
    <property type="protein sequence ID" value="AAN32168.1"/>
    <property type="molecule type" value="Genomic_DNA"/>
</dbReference>
<dbReference type="SMR" id="Q67I33"/>
<dbReference type="GO" id="GO:0009535">
    <property type="term" value="C:chloroplast thylakoid membrane"/>
    <property type="evidence" value="ECO:0007669"/>
    <property type="project" value="UniProtKB-SubCell"/>
</dbReference>
<dbReference type="GO" id="GO:0015979">
    <property type="term" value="P:photosynthesis"/>
    <property type="evidence" value="ECO:0007669"/>
    <property type="project" value="InterPro"/>
</dbReference>
<dbReference type="HAMAP" id="MF_00293">
    <property type="entry name" value="PSII_PsbN"/>
    <property type="match status" value="1"/>
</dbReference>
<dbReference type="InterPro" id="IPR003398">
    <property type="entry name" value="PSII_PsbN"/>
</dbReference>
<dbReference type="PANTHER" id="PTHR35326">
    <property type="entry name" value="PROTEIN PSBN"/>
    <property type="match status" value="1"/>
</dbReference>
<dbReference type="PANTHER" id="PTHR35326:SF3">
    <property type="entry name" value="PROTEIN PSBN"/>
    <property type="match status" value="1"/>
</dbReference>
<dbReference type="Pfam" id="PF02468">
    <property type="entry name" value="PsbN"/>
    <property type="match status" value="1"/>
</dbReference>
<accession>Q67I33</accession>
<name>PSBN_TYPAN</name>
<sequence length="43" mass="4662">METATLVAISISGLLVSFTGYALYTAFGQPSQQLRDPFEEHGD</sequence>
<comment type="function">
    <text evidence="1">May play a role in photosystem I and II biogenesis.</text>
</comment>
<comment type="subcellular location">
    <subcellularLocation>
        <location evidence="1">Plastid</location>
        <location evidence="1">Chloroplast thylakoid membrane</location>
        <topology evidence="1">Single-pass membrane protein</topology>
    </subcellularLocation>
</comment>
<comment type="similarity">
    <text evidence="1">Belongs to the PsbN family.</text>
</comment>
<comment type="caution">
    <text evidence="1">Originally thought to be a component of PSII; based on experiments in Synechocystis, N.tabacum and barley, and its absence from PSII in T.elongatus and T.vulcanus, this is probably not true.</text>
</comment>
<protein>
    <recommendedName>
        <fullName evidence="1">Protein PsbN</fullName>
    </recommendedName>
</protein>